<proteinExistence type="inferred from homology"/>
<gene>
    <name evidence="1" type="primary">groES</name>
    <name evidence="1" type="synonym">groS</name>
    <name type="ordered locus">Cpar_1367</name>
</gene>
<protein>
    <recommendedName>
        <fullName evidence="1">Co-chaperonin GroES</fullName>
    </recommendedName>
    <alternativeName>
        <fullName evidence="1">10 kDa chaperonin</fullName>
    </alternativeName>
    <alternativeName>
        <fullName evidence="1">Chaperonin-10</fullName>
        <shortName evidence="1">Cpn10</shortName>
    </alternativeName>
</protein>
<sequence>MNLKPLADRVIVKPAPAEEKTKGGLYIPDTGKEKPQYGEVVAVGEGKVADNGQLVQMQVKVGDKVLYGKYSGTEVQVEAEDYLIMRESDIFAILG</sequence>
<organism>
    <name type="scientific">Chlorobaculum parvum (strain DSM 263 / NCIMB 8327)</name>
    <name type="common">Chlorobium vibrioforme subsp. thiosulfatophilum</name>
    <dbReference type="NCBI Taxonomy" id="517417"/>
    <lineage>
        <taxon>Bacteria</taxon>
        <taxon>Pseudomonadati</taxon>
        <taxon>Chlorobiota</taxon>
        <taxon>Chlorobiia</taxon>
        <taxon>Chlorobiales</taxon>
        <taxon>Chlorobiaceae</taxon>
        <taxon>Chlorobaculum</taxon>
    </lineage>
</organism>
<dbReference type="EMBL" id="CP001099">
    <property type="protein sequence ID" value="ACF11769.1"/>
    <property type="molecule type" value="Genomic_DNA"/>
</dbReference>
<dbReference type="RefSeq" id="WP_012502602.1">
    <property type="nucleotide sequence ID" value="NC_011027.1"/>
</dbReference>
<dbReference type="SMR" id="B3QPB6"/>
<dbReference type="STRING" id="517417.Cpar_1367"/>
<dbReference type="KEGG" id="cpc:Cpar_1367"/>
<dbReference type="eggNOG" id="COG0234">
    <property type="taxonomic scope" value="Bacteria"/>
</dbReference>
<dbReference type="HOGENOM" id="CLU_132825_2_0_10"/>
<dbReference type="OrthoDB" id="9806791at2"/>
<dbReference type="Proteomes" id="UP000008811">
    <property type="component" value="Chromosome"/>
</dbReference>
<dbReference type="GO" id="GO:0005737">
    <property type="term" value="C:cytoplasm"/>
    <property type="evidence" value="ECO:0007669"/>
    <property type="project" value="UniProtKB-SubCell"/>
</dbReference>
<dbReference type="GO" id="GO:0005524">
    <property type="term" value="F:ATP binding"/>
    <property type="evidence" value="ECO:0007669"/>
    <property type="project" value="InterPro"/>
</dbReference>
<dbReference type="GO" id="GO:0046872">
    <property type="term" value="F:metal ion binding"/>
    <property type="evidence" value="ECO:0007669"/>
    <property type="project" value="TreeGrafter"/>
</dbReference>
<dbReference type="GO" id="GO:0044183">
    <property type="term" value="F:protein folding chaperone"/>
    <property type="evidence" value="ECO:0007669"/>
    <property type="project" value="InterPro"/>
</dbReference>
<dbReference type="GO" id="GO:0051087">
    <property type="term" value="F:protein-folding chaperone binding"/>
    <property type="evidence" value="ECO:0007669"/>
    <property type="project" value="TreeGrafter"/>
</dbReference>
<dbReference type="GO" id="GO:0051082">
    <property type="term" value="F:unfolded protein binding"/>
    <property type="evidence" value="ECO:0007669"/>
    <property type="project" value="TreeGrafter"/>
</dbReference>
<dbReference type="GO" id="GO:0051085">
    <property type="term" value="P:chaperone cofactor-dependent protein refolding"/>
    <property type="evidence" value="ECO:0007669"/>
    <property type="project" value="TreeGrafter"/>
</dbReference>
<dbReference type="CDD" id="cd00320">
    <property type="entry name" value="cpn10"/>
    <property type="match status" value="1"/>
</dbReference>
<dbReference type="FunFam" id="2.30.33.40:FF:000001">
    <property type="entry name" value="10 kDa chaperonin"/>
    <property type="match status" value="1"/>
</dbReference>
<dbReference type="Gene3D" id="2.30.33.40">
    <property type="entry name" value="GroES chaperonin"/>
    <property type="match status" value="1"/>
</dbReference>
<dbReference type="HAMAP" id="MF_00580">
    <property type="entry name" value="CH10"/>
    <property type="match status" value="1"/>
</dbReference>
<dbReference type="InterPro" id="IPR020818">
    <property type="entry name" value="Chaperonin_GroES"/>
</dbReference>
<dbReference type="InterPro" id="IPR037124">
    <property type="entry name" value="Chaperonin_GroES_sf"/>
</dbReference>
<dbReference type="InterPro" id="IPR018369">
    <property type="entry name" value="Chaprnonin_Cpn10_CS"/>
</dbReference>
<dbReference type="InterPro" id="IPR011032">
    <property type="entry name" value="GroES-like_sf"/>
</dbReference>
<dbReference type="NCBIfam" id="NF001527">
    <property type="entry name" value="PRK00364.1-2"/>
    <property type="match status" value="1"/>
</dbReference>
<dbReference type="NCBIfam" id="NF001529">
    <property type="entry name" value="PRK00364.1-5"/>
    <property type="match status" value="1"/>
</dbReference>
<dbReference type="NCBIfam" id="NF001531">
    <property type="entry name" value="PRK00364.2-2"/>
    <property type="match status" value="1"/>
</dbReference>
<dbReference type="NCBIfam" id="NF001533">
    <property type="entry name" value="PRK00364.2-4"/>
    <property type="match status" value="1"/>
</dbReference>
<dbReference type="NCBIfam" id="NF001534">
    <property type="entry name" value="PRK00364.2-5"/>
    <property type="match status" value="1"/>
</dbReference>
<dbReference type="PANTHER" id="PTHR10772">
    <property type="entry name" value="10 KDA HEAT SHOCK PROTEIN"/>
    <property type="match status" value="1"/>
</dbReference>
<dbReference type="PANTHER" id="PTHR10772:SF58">
    <property type="entry name" value="CO-CHAPERONIN GROES"/>
    <property type="match status" value="1"/>
</dbReference>
<dbReference type="Pfam" id="PF00166">
    <property type="entry name" value="Cpn10"/>
    <property type="match status" value="1"/>
</dbReference>
<dbReference type="PRINTS" id="PR00297">
    <property type="entry name" value="CHAPERONIN10"/>
</dbReference>
<dbReference type="SMART" id="SM00883">
    <property type="entry name" value="Cpn10"/>
    <property type="match status" value="1"/>
</dbReference>
<dbReference type="SUPFAM" id="SSF50129">
    <property type="entry name" value="GroES-like"/>
    <property type="match status" value="1"/>
</dbReference>
<dbReference type="PROSITE" id="PS00681">
    <property type="entry name" value="CHAPERONINS_CPN10"/>
    <property type="match status" value="1"/>
</dbReference>
<name>CH10_CHLP8</name>
<keyword id="KW-0143">Chaperone</keyword>
<keyword id="KW-0963">Cytoplasm</keyword>
<reference key="1">
    <citation type="submission" date="2008-06" db="EMBL/GenBank/DDBJ databases">
        <title>Complete sequence of Chlorobaculum parvum NCIB 8327.</title>
        <authorList>
            <consortium name="US DOE Joint Genome Institute"/>
            <person name="Lucas S."/>
            <person name="Copeland A."/>
            <person name="Lapidus A."/>
            <person name="Glavina del Rio T."/>
            <person name="Dalin E."/>
            <person name="Tice H."/>
            <person name="Bruce D."/>
            <person name="Goodwin L."/>
            <person name="Pitluck S."/>
            <person name="Schmutz J."/>
            <person name="Larimer F."/>
            <person name="Land M."/>
            <person name="Hauser L."/>
            <person name="Kyrpides N."/>
            <person name="Mikhailova N."/>
            <person name="Zhao F."/>
            <person name="Li T."/>
            <person name="Liu Z."/>
            <person name="Overmann J."/>
            <person name="Bryant D.A."/>
            <person name="Richardson P."/>
        </authorList>
    </citation>
    <scope>NUCLEOTIDE SEQUENCE [LARGE SCALE GENOMIC DNA]</scope>
    <source>
        <strain>DSM 263 / NCIMB 8327</strain>
    </source>
</reference>
<comment type="function">
    <text evidence="1">Together with the chaperonin GroEL, plays an essential role in assisting protein folding. The GroEL-GroES system forms a nano-cage that allows encapsulation of the non-native substrate proteins and provides a physical environment optimized to promote and accelerate protein folding. GroES binds to the apical surface of the GroEL ring, thereby capping the opening of the GroEL channel.</text>
</comment>
<comment type="subunit">
    <text evidence="1">Heptamer of 7 subunits arranged in a ring. Interacts with the chaperonin GroEL.</text>
</comment>
<comment type="subcellular location">
    <subcellularLocation>
        <location evidence="1">Cytoplasm</location>
    </subcellularLocation>
</comment>
<comment type="similarity">
    <text evidence="1">Belongs to the GroES chaperonin family.</text>
</comment>
<feature type="chain" id="PRO_1000129635" description="Co-chaperonin GroES">
    <location>
        <begin position="1"/>
        <end position="95"/>
    </location>
</feature>
<accession>B3QPB6</accession>
<evidence type="ECO:0000255" key="1">
    <source>
        <dbReference type="HAMAP-Rule" id="MF_00580"/>
    </source>
</evidence>